<feature type="chain" id="PRO_0000130155" description="Small ribosomal subunit protein uS3">
    <location>
        <begin position="1"/>
        <end position="280"/>
    </location>
</feature>
<feature type="domain" description="KH type-2" evidence="1">
    <location>
        <begin position="38"/>
        <end position="106"/>
    </location>
</feature>
<feature type="region of interest" description="Disordered" evidence="2">
    <location>
        <begin position="215"/>
        <end position="280"/>
    </location>
</feature>
<feature type="compositionally biased region" description="Low complexity" evidence="2">
    <location>
        <begin position="238"/>
        <end position="280"/>
    </location>
</feature>
<sequence length="280" mass="30588">MGQKINPYGFRLGITTDWKSRWYADKQYADYVKEDVAIRRLLSTGLERAGIADVEIERTRDRVRVDIHTARPGIVIGRRGTEADRIRADLEKLTGKQVQLNILEVRNPESQAQLVAQGVAEQLSNRVAFRRAMRKAIQSAMRQPNVKGIRVQCSGRLGGAEMSRSEFYREGRVPLHTLRADIGYGLYEAKTTFGRIGVKVWIYKGDVVGGKRELAAAAPAGAERPRRERPSGTRPRRSGASGTTATGTEAGRAAASADESTAAGQPAEAAPAAEPQSTES</sequence>
<gene>
    <name evidence="1" type="primary">rpsC</name>
    <name type="ordered locus">MAP_4167</name>
</gene>
<dbReference type="EMBL" id="AE016958">
    <property type="protein sequence ID" value="AAS06717.1"/>
    <property type="molecule type" value="Genomic_DNA"/>
</dbReference>
<dbReference type="RefSeq" id="WP_003873512.1">
    <property type="nucleotide sequence ID" value="NC_002944.2"/>
</dbReference>
<dbReference type="SMR" id="Q73SA8"/>
<dbReference type="STRING" id="262316.MAP_4167"/>
<dbReference type="KEGG" id="mpa:MAP_4167"/>
<dbReference type="PATRIC" id="fig|262316.17.peg.4439"/>
<dbReference type="eggNOG" id="COG0092">
    <property type="taxonomic scope" value="Bacteria"/>
</dbReference>
<dbReference type="HOGENOM" id="CLU_058591_0_0_11"/>
<dbReference type="Proteomes" id="UP000000580">
    <property type="component" value="Chromosome"/>
</dbReference>
<dbReference type="GO" id="GO:0022627">
    <property type="term" value="C:cytosolic small ribosomal subunit"/>
    <property type="evidence" value="ECO:0007669"/>
    <property type="project" value="TreeGrafter"/>
</dbReference>
<dbReference type="GO" id="GO:0003729">
    <property type="term" value="F:mRNA binding"/>
    <property type="evidence" value="ECO:0007669"/>
    <property type="project" value="UniProtKB-UniRule"/>
</dbReference>
<dbReference type="GO" id="GO:0019843">
    <property type="term" value="F:rRNA binding"/>
    <property type="evidence" value="ECO:0007669"/>
    <property type="project" value="UniProtKB-UniRule"/>
</dbReference>
<dbReference type="GO" id="GO:0003735">
    <property type="term" value="F:structural constituent of ribosome"/>
    <property type="evidence" value="ECO:0007669"/>
    <property type="project" value="InterPro"/>
</dbReference>
<dbReference type="GO" id="GO:0006412">
    <property type="term" value="P:translation"/>
    <property type="evidence" value="ECO:0007669"/>
    <property type="project" value="UniProtKB-UniRule"/>
</dbReference>
<dbReference type="CDD" id="cd02412">
    <property type="entry name" value="KH-II_30S_S3"/>
    <property type="match status" value="1"/>
</dbReference>
<dbReference type="FunFam" id="3.30.1140.32:FF:000002">
    <property type="entry name" value="30S ribosomal protein S3"/>
    <property type="match status" value="1"/>
</dbReference>
<dbReference type="FunFam" id="3.30.300.20:FF:000001">
    <property type="entry name" value="30S ribosomal protein S3"/>
    <property type="match status" value="1"/>
</dbReference>
<dbReference type="Gene3D" id="3.30.300.20">
    <property type="match status" value="1"/>
</dbReference>
<dbReference type="Gene3D" id="3.30.1140.32">
    <property type="entry name" value="Ribosomal protein S3, C-terminal domain"/>
    <property type="match status" value="1"/>
</dbReference>
<dbReference type="HAMAP" id="MF_01309_B">
    <property type="entry name" value="Ribosomal_uS3_B"/>
    <property type="match status" value="1"/>
</dbReference>
<dbReference type="InterPro" id="IPR004087">
    <property type="entry name" value="KH_dom"/>
</dbReference>
<dbReference type="InterPro" id="IPR015946">
    <property type="entry name" value="KH_dom-like_a/b"/>
</dbReference>
<dbReference type="InterPro" id="IPR004044">
    <property type="entry name" value="KH_dom_type_2"/>
</dbReference>
<dbReference type="InterPro" id="IPR009019">
    <property type="entry name" value="KH_sf_prok-type"/>
</dbReference>
<dbReference type="InterPro" id="IPR036419">
    <property type="entry name" value="Ribosomal_S3_C_sf"/>
</dbReference>
<dbReference type="InterPro" id="IPR005704">
    <property type="entry name" value="Ribosomal_uS3_bac-typ"/>
</dbReference>
<dbReference type="InterPro" id="IPR001351">
    <property type="entry name" value="Ribosomal_uS3_C"/>
</dbReference>
<dbReference type="NCBIfam" id="TIGR01009">
    <property type="entry name" value="rpsC_bact"/>
    <property type="match status" value="1"/>
</dbReference>
<dbReference type="PANTHER" id="PTHR11760">
    <property type="entry name" value="30S/40S RIBOSOMAL PROTEIN S3"/>
    <property type="match status" value="1"/>
</dbReference>
<dbReference type="PANTHER" id="PTHR11760:SF19">
    <property type="entry name" value="SMALL RIBOSOMAL SUBUNIT PROTEIN US3C"/>
    <property type="match status" value="1"/>
</dbReference>
<dbReference type="Pfam" id="PF07650">
    <property type="entry name" value="KH_2"/>
    <property type="match status" value="1"/>
</dbReference>
<dbReference type="Pfam" id="PF00189">
    <property type="entry name" value="Ribosomal_S3_C"/>
    <property type="match status" value="1"/>
</dbReference>
<dbReference type="SMART" id="SM00322">
    <property type="entry name" value="KH"/>
    <property type="match status" value="1"/>
</dbReference>
<dbReference type="SUPFAM" id="SSF54814">
    <property type="entry name" value="Prokaryotic type KH domain (KH-domain type II)"/>
    <property type="match status" value="1"/>
</dbReference>
<dbReference type="SUPFAM" id="SSF54821">
    <property type="entry name" value="Ribosomal protein S3 C-terminal domain"/>
    <property type="match status" value="1"/>
</dbReference>
<dbReference type="PROSITE" id="PS50823">
    <property type="entry name" value="KH_TYPE_2"/>
    <property type="match status" value="1"/>
</dbReference>
<reference key="1">
    <citation type="journal article" date="2005" name="Proc. Natl. Acad. Sci. U.S.A.">
        <title>The complete genome sequence of Mycobacterium avium subspecies paratuberculosis.</title>
        <authorList>
            <person name="Li L."/>
            <person name="Bannantine J.P."/>
            <person name="Zhang Q."/>
            <person name="Amonsin A."/>
            <person name="May B.J."/>
            <person name="Alt D."/>
            <person name="Banerji N."/>
            <person name="Kanjilal S."/>
            <person name="Kapur V."/>
        </authorList>
    </citation>
    <scope>NUCLEOTIDE SEQUENCE [LARGE SCALE GENOMIC DNA]</scope>
    <source>
        <strain>ATCC BAA-968 / K-10</strain>
    </source>
</reference>
<name>RS3_MYCPA</name>
<organism>
    <name type="scientific">Mycolicibacterium paratuberculosis (strain ATCC BAA-968 / K-10)</name>
    <name type="common">Mycobacterium paratuberculosis</name>
    <dbReference type="NCBI Taxonomy" id="262316"/>
    <lineage>
        <taxon>Bacteria</taxon>
        <taxon>Bacillati</taxon>
        <taxon>Actinomycetota</taxon>
        <taxon>Actinomycetes</taxon>
        <taxon>Mycobacteriales</taxon>
        <taxon>Mycobacteriaceae</taxon>
        <taxon>Mycobacterium</taxon>
        <taxon>Mycobacterium avium complex (MAC)</taxon>
    </lineage>
</organism>
<comment type="function">
    <text evidence="1">Binds the lower part of the 30S subunit head. Binds mRNA in the 70S ribosome, positioning it for translation.</text>
</comment>
<comment type="subunit">
    <text evidence="1">Part of the 30S ribosomal subunit. Forms a tight complex with proteins S10 and S14.</text>
</comment>
<comment type="similarity">
    <text evidence="1">Belongs to the universal ribosomal protein uS3 family.</text>
</comment>
<accession>Q73SA8</accession>
<proteinExistence type="inferred from homology"/>
<keyword id="KW-1185">Reference proteome</keyword>
<keyword id="KW-0687">Ribonucleoprotein</keyword>
<keyword id="KW-0689">Ribosomal protein</keyword>
<keyword id="KW-0694">RNA-binding</keyword>
<keyword id="KW-0699">rRNA-binding</keyword>
<evidence type="ECO:0000255" key="1">
    <source>
        <dbReference type="HAMAP-Rule" id="MF_01309"/>
    </source>
</evidence>
<evidence type="ECO:0000256" key="2">
    <source>
        <dbReference type="SAM" id="MobiDB-lite"/>
    </source>
</evidence>
<evidence type="ECO:0000305" key="3"/>
<protein>
    <recommendedName>
        <fullName evidence="1">Small ribosomal subunit protein uS3</fullName>
    </recommendedName>
    <alternativeName>
        <fullName evidence="3">30S ribosomal protein S3</fullName>
    </alternativeName>
</protein>